<evidence type="ECO:0000255" key="1">
    <source>
        <dbReference type="HAMAP-Rule" id="MF_00050"/>
    </source>
</evidence>
<comment type="function">
    <text evidence="1">Associates with the EF-Tu.GDP complex and induces the exchange of GDP to GTP. It remains bound to the aminoacyl-tRNA.EF-Tu.GTP complex up to the GTP hydrolysis stage on the ribosome.</text>
</comment>
<comment type="subcellular location">
    <subcellularLocation>
        <location evidence="1">Cytoplasm</location>
    </subcellularLocation>
</comment>
<comment type="similarity">
    <text evidence="1">Belongs to the EF-Ts family.</text>
</comment>
<gene>
    <name evidence="1" type="primary">tsf</name>
    <name type="ordered locus">LA_3297</name>
</gene>
<feature type="chain" id="PRO_0000161142" description="Elongation factor Ts">
    <location>
        <begin position="1"/>
        <end position="199"/>
    </location>
</feature>
<feature type="region of interest" description="Involved in Mg(2+) ion dislocation from EF-Tu" evidence="1">
    <location>
        <begin position="82"/>
        <end position="85"/>
    </location>
</feature>
<proteinExistence type="inferred from homology"/>
<reference key="1">
    <citation type="journal article" date="2003" name="Nature">
        <title>Unique physiological and pathogenic features of Leptospira interrogans revealed by whole-genome sequencing.</title>
        <authorList>
            <person name="Ren S.-X."/>
            <person name="Fu G."/>
            <person name="Jiang X.-G."/>
            <person name="Zeng R."/>
            <person name="Miao Y.-G."/>
            <person name="Xu H."/>
            <person name="Zhang Y.-X."/>
            <person name="Xiong H."/>
            <person name="Lu G."/>
            <person name="Lu L.-F."/>
            <person name="Jiang H.-Q."/>
            <person name="Jia J."/>
            <person name="Tu Y.-F."/>
            <person name="Jiang J.-X."/>
            <person name="Gu W.-Y."/>
            <person name="Zhang Y.-Q."/>
            <person name="Cai Z."/>
            <person name="Sheng H.-H."/>
            <person name="Yin H.-F."/>
            <person name="Zhang Y."/>
            <person name="Zhu G.-F."/>
            <person name="Wan M."/>
            <person name="Huang H.-L."/>
            <person name="Qian Z."/>
            <person name="Wang S.-Y."/>
            <person name="Ma W."/>
            <person name="Yao Z.-J."/>
            <person name="Shen Y."/>
            <person name="Qiang B.-Q."/>
            <person name="Xia Q.-C."/>
            <person name="Guo X.-K."/>
            <person name="Danchin A."/>
            <person name="Saint Girons I."/>
            <person name="Somerville R.L."/>
            <person name="Wen Y.-M."/>
            <person name="Shi M.-H."/>
            <person name="Chen Z."/>
            <person name="Xu J.-G."/>
            <person name="Zhao G.-P."/>
        </authorList>
    </citation>
    <scope>NUCLEOTIDE SEQUENCE [LARGE SCALE GENOMIC DNA]</scope>
    <source>
        <strain>56601</strain>
    </source>
</reference>
<protein>
    <recommendedName>
        <fullName evidence="1">Elongation factor Ts</fullName>
        <shortName evidence="1">EF-Ts</shortName>
    </recommendedName>
</protein>
<sequence>MAAVTTDLIRELRERTSAGMMDCKKALEENNADIEKAITWLREKGIAKAAKKAGRETKEGRVVSYIHGNGKIGVLVELNSETDFVSKNEDFEALGKEICMQIAAMNPLYLNEESIPAADLEKEKTIMRSQLEAEGKKADQIEKILPGKIKKYVSEVCLVNQAFFKDDSKTIDDLVKEAIAKFGENITIARFIRFQVGGL</sequence>
<name>EFTS_LEPIN</name>
<keyword id="KW-0963">Cytoplasm</keyword>
<keyword id="KW-0251">Elongation factor</keyword>
<keyword id="KW-0648">Protein biosynthesis</keyword>
<keyword id="KW-1185">Reference proteome</keyword>
<organism>
    <name type="scientific">Leptospira interrogans serogroup Icterohaemorrhagiae serovar Lai (strain 56601)</name>
    <dbReference type="NCBI Taxonomy" id="189518"/>
    <lineage>
        <taxon>Bacteria</taxon>
        <taxon>Pseudomonadati</taxon>
        <taxon>Spirochaetota</taxon>
        <taxon>Spirochaetia</taxon>
        <taxon>Leptospirales</taxon>
        <taxon>Leptospiraceae</taxon>
        <taxon>Leptospira</taxon>
    </lineage>
</organism>
<accession>Q8F141</accession>
<dbReference type="EMBL" id="AE010300">
    <property type="protein sequence ID" value="AAN50495.1"/>
    <property type="molecule type" value="Genomic_DNA"/>
</dbReference>
<dbReference type="RefSeq" id="NP_713477.1">
    <property type="nucleotide sequence ID" value="NC_004342.2"/>
</dbReference>
<dbReference type="RefSeq" id="WP_000741907.1">
    <property type="nucleotide sequence ID" value="NC_004342.2"/>
</dbReference>
<dbReference type="SMR" id="Q8F141"/>
<dbReference type="FunCoup" id="Q8F141">
    <property type="interactions" value="498"/>
</dbReference>
<dbReference type="STRING" id="189518.LA_3297"/>
<dbReference type="PaxDb" id="189518-LA_3297"/>
<dbReference type="EnsemblBacteria" id="AAN50495">
    <property type="protein sequence ID" value="AAN50495"/>
    <property type="gene ID" value="LA_3297"/>
</dbReference>
<dbReference type="KEGG" id="lil:LA_3297"/>
<dbReference type="PATRIC" id="fig|189518.3.peg.3267"/>
<dbReference type="HOGENOM" id="CLU_047155_1_1_12"/>
<dbReference type="InParanoid" id="Q8F141"/>
<dbReference type="OrthoDB" id="9808348at2"/>
<dbReference type="Proteomes" id="UP000001408">
    <property type="component" value="Chromosome I"/>
</dbReference>
<dbReference type="GO" id="GO:0005737">
    <property type="term" value="C:cytoplasm"/>
    <property type="evidence" value="ECO:0007669"/>
    <property type="project" value="UniProtKB-SubCell"/>
</dbReference>
<dbReference type="GO" id="GO:0003746">
    <property type="term" value="F:translation elongation factor activity"/>
    <property type="evidence" value="ECO:0000318"/>
    <property type="project" value="GO_Central"/>
</dbReference>
<dbReference type="GO" id="GO:0006414">
    <property type="term" value="P:translational elongation"/>
    <property type="evidence" value="ECO:0000318"/>
    <property type="project" value="GO_Central"/>
</dbReference>
<dbReference type="CDD" id="cd14275">
    <property type="entry name" value="UBA_EF-Ts"/>
    <property type="match status" value="1"/>
</dbReference>
<dbReference type="FunFam" id="1.10.286.20:FF:000001">
    <property type="entry name" value="Elongation factor Ts"/>
    <property type="match status" value="1"/>
</dbReference>
<dbReference type="FunFam" id="1.10.8.10:FF:000001">
    <property type="entry name" value="Elongation factor Ts"/>
    <property type="match status" value="1"/>
</dbReference>
<dbReference type="Gene3D" id="1.10.286.20">
    <property type="match status" value="1"/>
</dbReference>
<dbReference type="Gene3D" id="1.10.8.10">
    <property type="entry name" value="DNA helicase RuvA subunit, C-terminal domain"/>
    <property type="match status" value="1"/>
</dbReference>
<dbReference type="Gene3D" id="3.30.479.20">
    <property type="entry name" value="Elongation factor Ts, dimerisation domain"/>
    <property type="match status" value="1"/>
</dbReference>
<dbReference type="HAMAP" id="MF_00050">
    <property type="entry name" value="EF_Ts"/>
    <property type="match status" value="1"/>
</dbReference>
<dbReference type="InterPro" id="IPR036402">
    <property type="entry name" value="EF-Ts_dimer_sf"/>
</dbReference>
<dbReference type="InterPro" id="IPR001816">
    <property type="entry name" value="Transl_elong_EFTs/EF1B"/>
</dbReference>
<dbReference type="InterPro" id="IPR014039">
    <property type="entry name" value="Transl_elong_EFTs/EF1B_dimer"/>
</dbReference>
<dbReference type="InterPro" id="IPR018101">
    <property type="entry name" value="Transl_elong_Ts_CS"/>
</dbReference>
<dbReference type="InterPro" id="IPR009060">
    <property type="entry name" value="UBA-like_sf"/>
</dbReference>
<dbReference type="NCBIfam" id="TIGR00116">
    <property type="entry name" value="tsf"/>
    <property type="match status" value="1"/>
</dbReference>
<dbReference type="PANTHER" id="PTHR11741">
    <property type="entry name" value="ELONGATION FACTOR TS"/>
    <property type="match status" value="1"/>
</dbReference>
<dbReference type="PANTHER" id="PTHR11741:SF0">
    <property type="entry name" value="ELONGATION FACTOR TS, MITOCHONDRIAL"/>
    <property type="match status" value="1"/>
</dbReference>
<dbReference type="Pfam" id="PF00889">
    <property type="entry name" value="EF_TS"/>
    <property type="match status" value="1"/>
</dbReference>
<dbReference type="SUPFAM" id="SSF54713">
    <property type="entry name" value="Elongation factor Ts (EF-Ts), dimerisation domain"/>
    <property type="match status" value="1"/>
</dbReference>
<dbReference type="SUPFAM" id="SSF46934">
    <property type="entry name" value="UBA-like"/>
    <property type="match status" value="1"/>
</dbReference>
<dbReference type="PROSITE" id="PS01126">
    <property type="entry name" value="EF_TS_1"/>
    <property type="match status" value="1"/>
</dbReference>
<dbReference type="PROSITE" id="PS01127">
    <property type="entry name" value="EF_TS_2"/>
    <property type="match status" value="1"/>
</dbReference>